<evidence type="ECO:0000255" key="1">
    <source>
        <dbReference type="HAMAP-Rule" id="MF_00147"/>
    </source>
</evidence>
<reference key="1">
    <citation type="journal article" date="2008" name="J. Bacteriol.">
        <title>Genome sequence of the chemolithoautotrophic bacterium Oligotropha carboxidovorans OM5T.</title>
        <authorList>
            <person name="Paul D."/>
            <person name="Bridges S."/>
            <person name="Burgess S.C."/>
            <person name="Dandass Y."/>
            <person name="Lawrence M.L."/>
        </authorList>
    </citation>
    <scope>NUCLEOTIDE SEQUENCE [LARGE SCALE GENOMIC DNA]</scope>
    <source>
        <strain>ATCC 49405 / DSM 1227 / KCTC 32145 / OM5</strain>
    </source>
</reference>
<reference key="2">
    <citation type="journal article" date="2011" name="J. Bacteriol.">
        <title>Complete genome sequences of the chemolithoautotrophic Oligotropha carboxidovorans strains OM4 and OM5.</title>
        <authorList>
            <person name="Volland S."/>
            <person name="Rachinger M."/>
            <person name="Strittmatter A."/>
            <person name="Daniel R."/>
            <person name="Gottschalk G."/>
            <person name="Meyer O."/>
        </authorList>
    </citation>
    <scope>NUCLEOTIDE SEQUENCE [LARGE SCALE GENOMIC DNA]</scope>
    <source>
        <strain>ATCC 49405 / DSM 1227 / KCTC 32145 / OM5</strain>
    </source>
</reference>
<sequence>MPGKIRPLIAGNWKMNGLKASLGELAAIGKGAGEVWRRVDLLICPPATLIFPAAAAMIGSKVAIGGQDCHAEASGANTGDISAEMLADAGATYVIVGHSERRTDHGETDAVVRAKAEAAWRAGLVAIVCVGETRAERDAGRAAEVVGRQLDGSVPDGARAANLVVAYEPVWAIGTGLTPTSQDIEEIHAVIRQNLTGRFKAEGEGVRLLYGGSLKPANAAEILALANVNGGLIGGASLKAADFLAIAEACP</sequence>
<comment type="function">
    <text evidence="1">Involved in the gluconeogenesis. Catalyzes stereospecifically the conversion of dihydroxyacetone phosphate (DHAP) to D-glyceraldehyde-3-phosphate (G3P).</text>
</comment>
<comment type="catalytic activity">
    <reaction evidence="1">
        <text>D-glyceraldehyde 3-phosphate = dihydroxyacetone phosphate</text>
        <dbReference type="Rhea" id="RHEA:18585"/>
        <dbReference type="ChEBI" id="CHEBI:57642"/>
        <dbReference type="ChEBI" id="CHEBI:59776"/>
        <dbReference type="EC" id="5.3.1.1"/>
    </reaction>
</comment>
<comment type="pathway">
    <text evidence="1">Carbohydrate biosynthesis; gluconeogenesis.</text>
</comment>
<comment type="pathway">
    <text evidence="1">Carbohydrate degradation; glycolysis; D-glyceraldehyde 3-phosphate from glycerone phosphate: step 1/1.</text>
</comment>
<comment type="subunit">
    <text evidence="1">Homodimer.</text>
</comment>
<comment type="subcellular location">
    <subcellularLocation>
        <location evidence="1">Cytoplasm</location>
    </subcellularLocation>
</comment>
<comment type="similarity">
    <text evidence="1">Belongs to the triosephosphate isomerase family.</text>
</comment>
<organism>
    <name type="scientific">Afipia carboxidovorans (strain ATCC 49405 / DSM 1227 / KCTC 32145 / OM5)</name>
    <name type="common">Oligotropha carboxidovorans</name>
    <dbReference type="NCBI Taxonomy" id="504832"/>
    <lineage>
        <taxon>Bacteria</taxon>
        <taxon>Pseudomonadati</taxon>
        <taxon>Pseudomonadota</taxon>
        <taxon>Alphaproteobacteria</taxon>
        <taxon>Hyphomicrobiales</taxon>
        <taxon>Nitrobacteraceae</taxon>
        <taxon>Afipia</taxon>
    </lineage>
</organism>
<accession>B6JFZ2</accession>
<accession>F8BSA5</accession>
<keyword id="KW-0963">Cytoplasm</keyword>
<keyword id="KW-0312">Gluconeogenesis</keyword>
<keyword id="KW-0324">Glycolysis</keyword>
<keyword id="KW-0413">Isomerase</keyword>
<keyword id="KW-1185">Reference proteome</keyword>
<name>TPIS_AFIC5</name>
<proteinExistence type="inferred from homology"/>
<feature type="chain" id="PRO_1000096516" description="Triosephosphate isomerase">
    <location>
        <begin position="1"/>
        <end position="251"/>
    </location>
</feature>
<feature type="active site" description="Electrophile" evidence="1">
    <location>
        <position position="98"/>
    </location>
</feature>
<feature type="active site" description="Proton acceptor" evidence="1">
    <location>
        <position position="168"/>
    </location>
</feature>
<feature type="binding site" evidence="1">
    <location>
        <begin position="12"/>
        <end position="14"/>
    </location>
    <ligand>
        <name>substrate</name>
    </ligand>
</feature>
<feature type="binding site" evidence="1">
    <location>
        <position position="174"/>
    </location>
    <ligand>
        <name>substrate</name>
    </ligand>
</feature>
<feature type="binding site" evidence="1">
    <location>
        <position position="213"/>
    </location>
    <ligand>
        <name>substrate</name>
    </ligand>
</feature>
<feature type="binding site" evidence="1">
    <location>
        <begin position="234"/>
        <end position="235"/>
    </location>
    <ligand>
        <name>substrate</name>
    </ligand>
</feature>
<protein>
    <recommendedName>
        <fullName evidence="1">Triosephosphate isomerase</fullName>
        <shortName evidence="1">TIM</shortName>
        <shortName evidence="1">TPI</shortName>
        <ecNumber evidence="1">5.3.1.1</ecNumber>
    </recommendedName>
    <alternativeName>
        <fullName evidence="1">Triose-phosphate isomerase</fullName>
    </alternativeName>
</protein>
<gene>
    <name evidence="1" type="primary">tpiA</name>
    <name type="ordered locus">OCAR_6302</name>
    <name type="ordered locus">OCA5_c17320</name>
</gene>
<dbReference type="EC" id="5.3.1.1" evidence="1"/>
<dbReference type="EMBL" id="CP001196">
    <property type="protein sequence ID" value="ACI93415.1"/>
    <property type="molecule type" value="Genomic_DNA"/>
</dbReference>
<dbReference type="EMBL" id="CP002826">
    <property type="protein sequence ID" value="AEI06446.1"/>
    <property type="molecule type" value="Genomic_DNA"/>
</dbReference>
<dbReference type="RefSeq" id="WP_012563441.1">
    <property type="nucleotide sequence ID" value="NC_015684.1"/>
</dbReference>
<dbReference type="SMR" id="B6JFZ2"/>
<dbReference type="STRING" id="504832.OCA5_c17320"/>
<dbReference type="KEGG" id="oca:OCAR_6302"/>
<dbReference type="KEGG" id="ocg:OCA5_c17320"/>
<dbReference type="PATRIC" id="fig|504832.7.peg.1854"/>
<dbReference type="eggNOG" id="COG0149">
    <property type="taxonomic scope" value="Bacteria"/>
</dbReference>
<dbReference type="HOGENOM" id="CLU_024251_2_1_5"/>
<dbReference type="OrthoDB" id="9809429at2"/>
<dbReference type="UniPathway" id="UPA00109">
    <property type="reaction ID" value="UER00189"/>
</dbReference>
<dbReference type="UniPathway" id="UPA00138"/>
<dbReference type="Proteomes" id="UP000007730">
    <property type="component" value="Chromosome"/>
</dbReference>
<dbReference type="GO" id="GO:0005829">
    <property type="term" value="C:cytosol"/>
    <property type="evidence" value="ECO:0007669"/>
    <property type="project" value="TreeGrafter"/>
</dbReference>
<dbReference type="GO" id="GO:0004807">
    <property type="term" value="F:triose-phosphate isomerase activity"/>
    <property type="evidence" value="ECO:0007669"/>
    <property type="project" value="UniProtKB-UniRule"/>
</dbReference>
<dbReference type="GO" id="GO:0006094">
    <property type="term" value="P:gluconeogenesis"/>
    <property type="evidence" value="ECO:0007669"/>
    <property type="project" value="UniProtKB-UniRule"/>
</dbReference>
<dbReference type="GO" id="GO:0046166">
    <property type="term" value="P:glyceraldehyde-3-phosphate biosynthetic process"/>
    <property type="evidence" value="ECO:0007669"/>
    <property type="project" value="TreeGrafter"/>
</dbReference>
<dbReference type="GO" id="GO:0019563">
    <property type="term" value="P:glycerol catabolic process"/>
    <property type="evidence" value="ECO:0007669"/>
    <property type="project" value="TreeGrafter"/>
</dbReference>
<dbReference type="GO" id="GO:0006096">
    <property type="term" value="P:glycolytic process"/>
    <property type="evidence" value="ECO:0007669"/>
    <property type="project" value="UniProtKB-UniRule"/>
</dbReference>
<dbReference type="CDD" id="cd00311">
    <property type="entry name" value="TIM"/>
    <property type="match status" value="1"/>
</dbReference>
<dbReference type="FunFam" id="3.20.20.70:FF:000016">
    <property type="entry name" value="Triosephosphate isomerase"/>
    <property type="match status" value="1"/>
</dbReference>
<dbReference type="Gene3D" id="3.20.20.70">
    <property type="entry name" value="Aldolase class I"/>
    <property type="match status" value="1"/>
</dbReference>
<dbReference type="HAMAP" id="MF_00147_B">
    <property type="entry name" value="TIM_B"/>
    <property type="match status" value="1"/>
</dbReference>
<dbReference type="InterPro" id="IPR013785">
    <property type="entry name" value="Aldolase_TIM"/>
</dbReference>
<dbReference type="InterPro" id="IPR035990">
    <property type="entry name" value="TIM_sf"/>
</dbReference>
<dbReference type="InterPro" id="IPR022896">
    <property type="entry name" value="TrioseP_Isoase_bac/euk"/>
</dbReference>
<dbReference type="InterPro" id="IPR000652">
    <property type="entry name" value="Triosephosphate_isomerase"/>
</dbReference>
<dbReference type="InterPro" id="IPR020861">
    <property type="entry name" value="Triosephosphate_isomerase_AS"/>
</dbReference>
<dbReference type="NCBIfam" id="TIGR00419">
    <property type="entry name" value="tim"/>
    <property type="match status" value="1"/>
</dbReference>
<dbReference type="PANTHER" id="PTHR21139">
    <property type="entry name" value="TRIOSEPHOSPHATE ISOMERASE"/>
    <property type="match status" value="1"/>
</dbReference>
<dbReference type="PANTHER" id="PTHR21139:SF42">
    <property type="entry name" value="TRIOSEPHOSPHATE ISOMERASE"/>
    <property type="match status" value="1"/>
</dbReference>
<dbReference type="Pfam" id="PF00121">
    <property type="entry name" value="TIM"/>
    <property type="match status" value="1"/>
</dbReference>
<dbReference type="SUPFAM" id="SSF51351">
    <property type="entry name" value="Triosephosphate isomerase (TIM)"/>
    <property type="match status" value="1"/>
</dbReference>
<dbReference type="PROSITE" id="PS00171">
    <property type="entry name" value="TIM_1"/>
    <property type="match status" value="1"/>
</dbReference>
<dbReference type="PROSITE" id="PS51440">
    <property type="entry name" value="TIM_2"/>
    <property type="match status" value="1"/>
</dbReference>